<keyword id="KW-1185">Reference proteome</keyword>
<dbReference type="EMBL" id="CU329670">
    <property type="protein sequence ID" value="CAB10141.3"/>
    <property type="molecule type" value="Genomic_DNA"/>
</dbReference>
<dbReference type="SMR" id="O14017"/>
<dbReference type="FunCoup" id="O14017">
    <property type="interactions" value="21"/>
</dbReference>
<dbReference type="STRING" id="284812.O14017"/>
<dbReference type="PaxDb" id="4896-SPAC29A4.14c.1"/>
<dbReference type="EnsemblFungi" id="SPAC29A4.14c.1">
    <property type="protein sequence ID" value="SPAC29A4.14c.1:pep"/>
    <property type="gene ID" value="SPAC29A4.14c"/>
</dbReference>
<dbReference type="KEGG" id="spo:2541734"/>
<dbReference type="PomBase" id="SPAC29A4.14c"/>
<dbReference type="VEuPathDB" id="FungiDB:SPAC29A4.14c"/>
<dbReference type="HOGENOM" id="CLU_802062_0_0_1"/>
<dbReference type="InParanoid" id="O14017"/>
<dbReference type="OMA" id="SKKYVVT"/>
<dbReference type="Reactome" id="R-SPO-9603798">
    <property type="pathway name" value="Class I peroxisomal membrane protein import"/>
</dbReference>
<dbReference type="PRO" id="PR:O14017"/>
<dbReference type="Proteomes" id="UP000002485">
    <property type="component" value="Chromosome I"/>
</dbReference>
<dbReference type="GO" id="GO:0005829">
    <property type="term" value="C:cytosol"/>
    <property type="evidence" value="ECO:0007005"/>
    <property type="project" value="PomBase"/>
</dbReference>
<dbReference type="GO" id="GO:0005634">
    <property type="term" value="C:nucleus"/>
    <property type="evidence" value="ECO:0007005"/>
    <property type="project" value="PomBase"/>
</dbReference>
<dbReference type="GO" id="GO:0005778">
    <property type="term" value="C:peroxisomal membrane"/>
    <property type="evidence" value="ECO:0000318"/>
    <property type="project" value="GO_Central"/>
</dbReference>
<dbReference type="GO" id="GO:0030674">
    <property type="term" value="F:protein-macromolecule adaptor activity"/>
    <property type="evidence" value="ECO:0000318"/>
    <property type="project" value="GO_Central"/>
</dbReference>
<dbReference type="GO" id="GO:0043495">
    <property type="term" value="F:protein-membrane adaptor activity"/>
    <property type="evidence" value="ECO:0000266"/>
    <property type="project" value="PomBase"/>
</dbReference>
<dbReference type="GO" id="GO:0045046">
    <property type="term" value="P:protein import into peroxisome membrane"/>
    <property type="evidence" value="ECO:0000318"/>
    <property type="project" value="GO_Central"/>
</dbReference>
<dbReference type="GO" id="GO:0006625">
    <property type="term" value="P:protein targeting to peroxisome"/>
    <property type="evidence" value="ECO:0000266"/>
    <property type="project" value="PomBase"/>
</dbReference>
<dbReference type="InterPro" id="IPR006966">
    <property type="entry name" value="Peroxin-3"/>
</dbReference>
<dbReference type="PANTHER" id="PTHR28080">
    <property type="entry name" value="PEROXISOMAL BIOGENESIS FACTOR 3"/>
    <property type="match status" value="1"/>
</dbReference>
<dbReference type="PANTHER" id="PTHR28080:SF1">
    <property type="entry name" value="PEROXISOMAL BIOGENESIS FACTOR 3"/>
    <property type="match status" value="1"/>
</dbReference>
<dbReference type="Pfam" id="PF04882">
    <property type="entry name" value="Peroxin-3"/>
    <property type="match status" value="1"/>
</dbReference>
<protein>
    <recommendedName>
        <fullName>Uncharacterized protein C29A4.14c</fullName>
    </recommendedName>
</protein>
<name>YDPE_SCHPO</name>
<reference key="1">
    <citation type="journal article" date="2002" name="Nature">
        <title>The genome sequence of Schizosaccharomyces pombe.</title>
        <authorList>
            <person name="Wood V."/>
            <person name="Gwilliam R."/>
            <person name="Rajandream M.A."/>
            <person name="Lyne M.H."/>
            <person name="Lyne R."/>
            <person name="Stewart A."/>
            <person name="Sgouros J.G."/>
            <person name="Peat N."/>
            <person name="Hayles J."/>
            <person name="Baker S.G."/>
            <person name="Basham D."/>
            <person name="Bowman S."/>
            <person name="Brooks K."/>
            <person name="Brown D."/>
            <person name="Brown S."/>
            <person name="Chillingworth T."/>
            <person name="Churcher C.M."/>
            <person name="Collins M."/>
            <person name="Connor R."/>
            <person name="Cronin A."/>
            <person name="Davis P."/>
            <person name="Feltwell T."/>
            <person name="Fraser A."/>
            <person name="Gentles S."/>
            <person name="Goble A."/>
            <person name="Hamlin N."/>
            <person name="Harris D.E."/>
            <person name="Hidalgo J."/>
            <person name="Hodgson G."/>
            <person name="Holroyd S."/>
            <person name="Hornsby T."/>
            <person name="Howarth S."/>
            <person name="Huckle E.J."/>
            <person name="Hunt S."/>
            <person name="Jagels K."/>
            <person name="James K.D."/>
            <person name="Jones L."/>
            <person name="Jones M."/>
            <person name="Leather S."/>
            <person name="McDonald S."/>
            <person name="McLean J."/>
            <person name="Mooney P."/>
            <person name="Moule S."/>
            <person name="Mungall K.L."/>
            <person name="Murphy L.D."/>
            <person name="Niblett D."/>
            <person name="Odell C."/>
            <person name="Oliver K."/>
            <person name="O'Neil S."/>
            <person name="Pearson D."/>
            <person name="Quail M.A."/>
            <person name="Rabbinowitsch E."/>
            <person name="Rutherford K.M."/>
            <person name="Rutter S."/>
            <person name="Saunders D."/>
            <person name="Seeger K."/>
            <person name="Sharp S."/>
            <person name="Skelton J."/>
            <person name="Simmonds M.N."/>
            <person name="Squares R."/>
            <person name="Squares S."/>
            <person name="Stevens K."/>
            <person name="Taylor K."/>
            <person name="Taylor R.G."/>
            <person name="Tivey A."/>
            <person name="Walsh S.V."/>
            <person name="Warren T."/>
            <person name="Whitehead S."/>
            <person name="Woodward J.R."/>
            <person name="Volckaert G."/>
            <person name="Aert R."/>
            <person name="Robben J."/>
            <person name="Grymonprez B."/>
            <person name="Weltjens I."/>
            <person name="Vanstreels E."/>
            <person name="Rieger M."/>
            <person name="Schaefer M."/>
            <person name="Mueller-Auer S."/>
            <person name="Gabel C."/>
            <person name="Fuchs M."/>
            <person name="Duesterhoeft A."/>
            <person name="Fritzc C."/>
            <person name="Holzer E."/>
            <person name="Moestl D."/>
            <person name="Hilbert H."/>
            <person name="Borzym K."/>
            <person name="Langer I."/>
            <person name="Beck A."/>
            <person name="Lehrach H."/>
            <person name="Reinhardt R."/>
            <person name="Pohl T.M."/>
            <person name="Eger P."/>
            <person name="Zimmermann W."/>
            <person name="Wedler H."/>
            <person name="Wambutt R."/>
            <person name="Purnelle B."/>
            <person name="Goffeau A."/>
            <person name="Cadieu E."/>
            <person name="Dreano S."/>
            <person name="Gloux S."/>
            <person name="Lelaure V."/>
            <person name="Mottier S."/>
            <person name="Galibert F."/>
            <person name="Aves S.J."/>
            <person name="Xiang Z."/>
            <person name="Hunt C."/>
            <person name="Moore K."/>
            <person name="Hurst S.M."/>
            <person name="Lucas M."/>
            <person name="Rochet M."/>
            <person name="Gaillardin C."/>
            <person name="Tallada V.A."/>
            <person name="Garzon A."/>
            <person name="Thode G."/>
            <person name="Daga R.R."/>
            <person name="Cruzado L."/>
            <person name="Jimenez J."/>
            <person name="Sanchez M."/>
            <person name="del Rey F."/>
            <person name="Benito J."/>
            <person name="Dominguez A."/>
            <person name="Revuelta J.L."/>
            <person name="Moreno S."/>
            <person name="Armstrong J."/>
            <person name="Forsburg S.L."/>
            <person name="Cerutti L."/>
            <person name="Lowe T."/>
            <person name="McCombie W.R."/>
            <person name="Paulsen I."/>
            <person name="Potashkin J."/>
            <person name="Shpakovski G.V."/>
            <person name="Ussery D."/>
            <person name="Barrell B.G."/>
            <person name="Nurse P."/>
        </authorList>
    </citation>
    <scope>NUCLEOTIDE SEQUENCE [LARGE SCALE GENOMIC DNA]</scope>
    <source>
        <strain>972 / ATCC 24843</strain>
    </source>
</reference>
<accession>O14017</accession>
<gene>
    <name type="ORF">SPAC29A4.14c</name>
</gene>
<proteinExistence type="predicted"/>
<feature type="chain" id="PRO_0000116651" description="Uncharacterized protein C29A4.14c">
    <location>
        <begin position="1"/>
        <end position="346"/>
    </location>
</feature>
<organism>
    <name type="scientific">Schizosaccharomyces pombe (strain 972 / ATCC 24843)</name>
    <name type="common">Fission yeast</name>
    <dbReference type="NCBI Taxonomy" id="284812"/>
    <lineage>
        <taxon>Eukaryota</taxon>
        <taxon>Fungi</taxon>
        <taxon>Dikarya</taxon>
        <taxon>Ascomycota</taxon>
        <taxon>Taphrinomycotina</taxon>
        <taxon>Schizosaccharomycetes</taxon>
        <taxon>Schizosaccharomycetales</taxon>
        <taxon>Schizosaccharomycetaceae</taxon>
        <taxon>Schizosaccharomyces</taxon>
    </lineage>
</organism>
<sequence length="346" mass="39445">MLKSFEKHLNAVSRKCCNFILGSSIPVLGFYCADTCIRNAFMEFMETRNSKSKYVEAFNTVQSNGATSAISTFHILKDEIIRRIPLLPIIQELRETRMSEVSAEEKILLWNQLKFMSLVRMFTTLAVLAQCNLLCKLALTVLGREAFKEQMVKEFDPSNTLRPSGSDEDPAVFTGIAYILLNNQLDELIQQVQLAVTLTFEEVSPTDIVDRKLIEALTTRVVEVFVNNYQFSIDGNKEVLLAEIPKQYIVTGNLLYRVLELEDFATQMDASIVMKNELIALNEHMLTYLPSIPQEGIRLAKILTTFTKISENVFEAPFQEQFFQSLQMVSDVNRYMAIVFSSFDDC</sequence>